<reference key="1">
    <citation type="journal article" date="2010" name="Genome Biol. Evol.">
        <title>Continuing evolution of Burkholderia mallei through genome reduction and large-scale rearrangements.</title>
        <authorList>
            <person name="Losada L."/>
            <person name="Ronning C.M."/>
            <person name="DeShazer D."/>
            <person name="Woods D."/>
            <person name="Fedorova N."/>
            <person name="Kim H.S."/>
            <person name="Shabalina S.A."/>
            <person name="Pearson T.R."/>
            <person name="Brinkac L."/>
            <person name="Tan P."/>
            <person name="Nandi T."/>
            <person name="Crabtree J."/>
            <person name="Badger J."/>
            <person name="Beckstrom-Sternberg S."/>
            <person name="Saqib M."/>
            <person name="Schutzer S.E."/>
            <person name="Keim P."/>
            <person name="Nierman W.C."/>
        </authorList>
    </citation>
    <scope>NUCLEOTIDE SEQUENCE [LARGE SCALE GENOMIC DNA]</scope>
    <source>
        <strain>NCTC 10247</strain>
    </source>
</reference>
<sequence length="343" mass="37461">MKALAKLERGPGLTLTRVKKPEVGHNDVLIKIRRTAICGTDIHIWKWDDWAQKTIPVPMHVGHEYVGEIVEMGQEVRGFSIGDRVSGEGHITCGFCRNCRAGRRHLCRNTVGVGVNREGAFAEYLAIPAFNAFKIPPEISDDLAAIFDPFGNATHTALSFNLVGEDVLITGAGPIGVMAVAIAKHVGARNVVITDINDYRLELARKMGATRAVNVSRESLRDVMADLHMTEGFDVGLEMSGVPSAFTSLLESMNHGGKVALLGIPPAQTAIDWNQVIFKGLEIKGIYGREMFETWYKMVAMLQSGLDLSPIITHRFAVDDYEKGFAAMLSGESGKVILDWADA</sequence>
<feature type="chain" id="PRO_1000051620" description="L-threonine 3-dehydrogenase">
    <location>
        <begin position="1"/>
        <end position="343"/>
    </location>
</feature>
<feature type="active site" description="Charge relay system" evidence="1">
    <location>
        <position position="40"/>
    </location>
</feature>
<feature type="active site" description="Charge relay system" evidence="1">
    <location>
        <position position="43"/>
    </location>
</feature>
<feature type="binding site" evidence="1">
    <location>
        <position position="38"/>
    </location>
    <ligand>
        <name>Zn(2+)</name>
        <dbReference type="ChEBI" id="CHEBI:29105"/>
        <label>1</label>
        <note>catalytic</note>
    </ligand>
</feature>
<feature type="binding site" evidence="1">
    <location>
        <position position="63"/>
    </location>
    <ligand>
        <name>Zn(2+)</name>
        <dbReference type="ChEBI" id="CHEBI:29105"/>
        <label>1</label>
        <note>catalytic</note>
    </ligand>
</feature>
<feature type="binding site" evidence="1">
    <location>
        <position position="64"/>
    </location>
    <ligand>
        <name>Zn(2+)</name>
        <dbReference type="ChEBI" id="CHEBI:29105"/>
        <label>1</label>
        <note>catalytic</note>
    </ligand>
</feature>
<feature type="binding site" evidence="1">
    <location>
        <position position="93"/>
    </location>
    <ligand>
        <name>Zn(2+)</name>
        <dbReference type="ChEBI" id="CHEBI:29105"/>
        <label>2</label>
    </ligand>
</feature>
<feature type="binding site" evidence="1">
    <location>
        <position position="96"/>
    </location>
    <ligand>
        <name>Zn(2+)</name>
        <dbReference type="ChEBI" id="CHEBI:29105"/>
        <label>2</label>
    </ligand>
</feature>
<feature type="binding site" evidence="1">
    <location>
        <position position="99"/>
    </location>
    <ligand>
        <name>Zn(2+)</name>
        <dbReference type="ChEBI" id="CHEBI:29105"/>
        <label>2</label>
    </ligand>
</feature>
<feature type="binding site" evidence="1">
    <location>
        <position position="107"/>
    </location>
    <ligand>
        <name>Zn(2+)</name>
        <dbReference type="ChEBI" id="CHEBI:29105"/>
        <label>2</label>
    </ligand>
</feature>
<feature type="binding site" evidence="1">
    <location>
        <position position="175"/>
    </location>
    <ligand>
        <name>NAD(+)</name>
        <dbReference type="ChEBI" id="CHEBI:57540"/>
    </ligand>
</feature>
<feature type="binding site" evidence="1">
    <location>
        <position position="195"/>
    </location>
    <ligand>
        <name>NAD(+)</name>
        <dbReference type="ChEBI" id="CHEBI:57540"/>
    </ligand>
</feature>
<feature type="binding site" evidence="1">
    <location>
        <position position="200"/>
    </location>
    <ligand>
        <name>NAD(+)</name>
        <dbReference type="ChEBI" id="CHEBI:57540"/>
    </ligand>
</feature>
<feature type="binding site" evidence="1">
    <location>
        <begin position="262"/>
        <end position="264"/>
    </location>
    <ligand>
        <name>NAD(+)</name>
        <dbReference type="ChEBI" id="CHEBI:57540"/>
    </ligand>
</feature>
<feature type="binding site" evidence="1">
    <location>
        <begin position="286"/>
        <end position="287"/>
    </location>
    <ligand>
        <name>NAD(+)</name>
        <dbReference type="ChEBI" id="CHEBI:57540"/>
    </ligand>
</feature>
<feature type="site" description="Important for catalytic activity for the proton relay mechanism but does not participate directly in the coordination of zinc atom" evidence="1">
    <location>
        <position position="148"/>
    </location>
</feature>
<dbReference type="EC" id="1.1.1.103" evidence="1"/>
<dbReference type="EMBL" id="CP000547">
    <property type="protein sequence ID" value="ABO01910.1"/>
    <property type="molecule type" value="Genomic_DNA"/>
</dbReference>
<dbReference type="RefSeq" id="WP_004194543.1">
    <property type="nucleotide sequence ID" value="NZ_CP007801.1"/>
</dbReference>
<dbReference type="SMR" id="A3MAC8"/>
<dbReference type="GeneID" id="93062068"/>
<dbReference type="KEGG" id="bmaz:BM44_3653"/>
<dbReference type="KEGG" id="bmn:BMA10247_A0007"/>
<dbReference type="PATRIC" id="fig|320389.8.peg.4129"/>
<dbReference type="UniPathway" id="UPA00046">
    <property type="reaction ID" value="UER00505"/>
</dbReference>
<dbReference type="GO" id="GO:0005737">
    <property type="term" value="C:cytoplasm"/>
    <property type="evidence" value="ECO:0007669"/>
    <property type="project" value="UniProtKB-SubCell"/>
</dbReference>
<dbReference type="GO" id="GO:0008743">
    <property type="term" value="F:L-threonine 3-dehydrogenase activity"/>
    <property type="evidence" value="ECO:0007669"/>
    <property type="project" value="UniProtKB-UniRule"/>
</dbReference>
<dbReference type="GO" id="GO:0008270">
    <property type="term" value="F:zinc ion binding"/>
    <property type="evidence" value="ECO:0007669"/>
    <property type="project" value="UniProtKB-UniRule"/>
</dbReference>
<dbReference type="GO" id="GO:0019518">
    <property type="term" value="P:L-threonine catabolic process to glycine"/>
    <property type="evidence" value="ECO:0007669"/>
    <property type="project" value="UniProtKB-UniPathway"/>
</dbReference>
<dbReference type="Gene3D" id="3.90.180.10">
    <property type="entry name" value="Medium-chain alcohol dehydrogenases, catalytic domain"/>
    <property type="match status" value="1"/>
</dbReference>
<dbReference type="Gene3D" id="3.40.50.720">
    <property type="entry name" value="NAD(P)-binding Rossmann-like Domain"/>
    <property type="match status" value="1"/>
</dbReference>
<dbReference type="HAMAP" id="MF_00627">
    <property type="entry name" value="Thr_dehydrog"/>
    <property type="match status" value="1"/>
</dbReference>
<dbReference type="InterPro" id="IPR013149">
    <property type="entry name" value="ADH-like_C"/>
</dbReference>
<dbReference type="InterPro" id="IPR013154">
    <property type="entry name" value="ADH-like_N"/>
</dbReference>
<dbReference type="InterPro" id="IPR002328">
    <property type="entry name" value="ADH_Zn_CS"/>
</dbReference>
<dbReference type="InterPro" id="IPR011032">
    <property type="entry name" value="GroES-like_sf"/>
</dbReference>
<dbReference type="InterPro" id="IPR004627">
    <property type="entry name" value="L-Threonine_3-DHase"/>
</dbReference>
<dbReference type="InterPro" id="IPR036291">
    <property type="entry name" value="NAD(P)-bd_dom_sf"/>
</dbReference>
<dbReference type="InterPro" id="IPR020843">
    <property type="entry name" value="PKS_ER"/>
</dbReference>
<dbReference type="InterPro" id="IPR050129">
    <property type="entry name" value="Zn_alcohol_dh"/>
</dbReference>
<dbReference type="NCBIfam" id="NF003808">
    <property type="entry name" value="PRK05396.1"/>
    <property type="match status" value="1"/>
</dbReference>
<dbReference type="NCBIfam" id="TIGR00692">
    <property type="entry name" value="tdh"/>
    <property type="match status" value="1"/>
</dbReference>
<dbReference type="PANTHER" id="PTHR43401">
    <property type="entry name" value="L-THREONINE 3-DEHYDROGENASE"/>
    <property type="match status" value="1"/>
</dbReference>
<dbReference type="PANTHER" id="PTHR43401:SF2">
    <property type="entry name" value="L-THREONINE 3-DEHYDROGENASE"/>
    <property type="match status" value="1"/>
</dbReference>
<dbReference type="Pfam" id="PF08240">
    <property type="entry name" value="ADH_N"/>
    <property type="match status" value="1"/>
</dbReference>
<dbReference type="Pfam" id="PF00107">
    <property type="entry name" value="ADH_zinc_N"/>
    <property type="match status" value="1"/>
</dbReference>
<dbReference type="SMART" id="SM00829">
    <property type="entry name" value="PKS_ER"/>
    <property type="match status" value="1"/>
</dbReference>
<dbReference type="SUPFAM" id="SSF50129">
    <property type="entry name" value="GroES-like"/>
    <property type="match status" value="1"/>
</dbReference>
<dbReference type="SUPFAM" id="SSF51735">
    <property type="entry name" value="NAD(P)-binding Rossmann-fold domains"/>
    <property type="match status" value="1"/>
</dbReference>
<dbReference type="PROSITE" id="PS00059">
    <property type="entry name" value="ADH_ZINC"/>
    <property type="match status" value="1"/>
</dbReference>
<keyword id="KW-0963">Cytoplasm</keyword>
<keyword id="KW-0479">Metal-binding</keyword>
<keyword id="KW-0520">NAD</keyword>
<keyword id="KW-0560">Oxidoreductase</keyword>
<keyword id="KW-0862">Zinc</keyword>
<comment type="function">
    <text evidence="1">Catalyzes the NAD(+)-dependent oxidation of L-threonine to 2-amino-3-ketobutyrate.</text>
</comment>
<comment type="catalytic activity">
    <reaction evidence="1">
        <text>L-threonine + NAD(+) = (2S)-2-amino-3-oxobutanoate + NADH + H(+)</text>
        <dbReference type="Rhea" id="RHEA:13161"/>
        <dbReference type="ChEBI" id="CHEBI:15378"/>
        <dbReference type="ChEBI" id="CHEBI:57540"/>
        <dbReference type="ChEBI" id="CHEBI:57926"/>
        <dbReference type="ChEBI" id="CHEBI:57945"/>
        <dbReference type="ChEBI" id="CHEBI:78948"/>
        <dbReference type="EC" id="1.1.1.103"/>
    </reaction>
</comment>
<comment type="cofactor">
    <cofactor evidence="1">
        <name>Zn(2+)</name>
        <dbReference type="ChEBI" id="CHEBI:29105"/>
    </cofactor>
    <text evidence="1">Binds 2 Zn(2+) ions per subunit.</text>
</comment>
<comment type="pathway">
    <text evidence="1">Amino-acid degradation; L-threonine degradation via oxydo-reductase pathway; glycine from L-threonine: step 1/2.</text>
</comment>
<comment type="subunit">
    <text evidence="1">Homotetramer.</text>
</comment>
<comment type="subcellular location">
    <subcellularLocation>
        <location evidence="1">Cytoplasm</location>
    </subcellularLocation>
</comment>
<comment type="similarity">
    <text evidence="1">Belongs to the zinc-containing alcohol dehydrogenase family.</text>
</comment>
<name>TDH_BURM7</name>
<gene>
    <name evidence="1" type="primary">tdh</name>
    <name type="ordered locus">BMA10247_A0007</name>
</gene>
<organism>
    <name type="scientific">Burkholderia mallei (strain NCTC 10247)</name>
    <dbReference type="NCBI Taxonomy" id="320389"/>
    <lineage>
        <taxon>Bacteria</taxon>
        <taxon>Pseudomonadati</taxon>
        <taxon>Pseudomonadota</taxon>
        <taxon>Betaproteobacteria</taxon>
        <taxon>Burkholderiales</taxon>
        <taxon>Burkholderiaceae</taxon>
        <taxon>Burkholderia</taxon>
        <taxon>pseudomallei group</taxon>
    </lineage>
</organism>
<proteinExistence type="inferred from homology"/>
<evidence type="ECO:0000255" key="1">
    <source>
        <dbReference type="HAMAP-Rule" id="MF_00627"/>
    </source>
</evidence>
<accession>A3MAC8</accession>
<protein>
    <recommendedName>
        <fullName evidence="1">L-threonine 3-dehydrogenase</fullName>
        <shortName evidence="1">TDH</shortName>
        <ecNumber evidence="1">1.1.1.103</ecNumber>
    </recommendedName>
</protein>